<comment type="function">
    <text evidence="4">Involved in resistance to abiotic stress.</text>
</comment>
<comment type="subunit">
    <text evidence="3">Homodimer and heterodimers (PubMed:29272523). Binds weakly to CYSTM4, CYSTM6 and CYSTM7 (PubMed:29272523).</text>
</comment>
<comment type="subcellular location">
    <subcellularLocation>
        <location evidence="3">Cell membrane</location>
        <topology evidence="1">Single-pass membrane protein</topology>
    </subcellularLocation>
    <subcellularLocation>
        <location evidence="3">Cytoplasm</location>
    </subcellularLocation>
</comment>
<comment type="alternative products">
    <event type="alternative splicing"/>
    <isoform>
        <id>Q6NN03-1</id>
        <name>1</name>
        <sequence type="displayed"/>
    </isoform>
    <isoform>
        <id>Q6NN03-2</id>
        <name>2</name>
        <sequence type="described" ref="VSP_061396 VSP_061397"/>
    </isoform>
</comment>
<comment type="tissue specificity">
    <text evidence="3">Mostly expressed in roots, flowers and siliques and, to a lower extent, in stems and leaves.</text>
</comment>
<comment type="induction">
    <text evidence="3">Induced by salt in shoots.</text>
</comment>
<comment type="similarity">
    <text evidence="5">Belongs to the CYSTM1 family.</text>
</comment>
<dbReference type="EMBL" id="AL162873">
    <property type="protein sequence ID" value="CAB85528.1"/>
    <property type="molecule type" value="Genomic_DNA"/>
</dbReference>
<dbReference type="EMBL" id="CP002688">
    <property type="protein sequence ID" value="AED90694.1"/>
    <property type="molecule type" value="Genomic_DNA"/>
</dbReference>
<dbReference type="EMBL" id="CP002688">
    <property type="protein sequence ID" value="AED90695.1"/>
    <property type="molecule type" value="Genomic_DNA"/>
</dbReference>
<dbReference type="EMBL" id="BT010917">
    <property type="protein sequence ID" value="AAR24695.1"/>
    <property type="molecule type" value="mRNA"/>
</dbReference>
<dbReference type="EMBL" id="BT011498">
    <property type="protein sequence ID" value="AAS00338.1"/>
    <property type="molecule type" value="mRNA"/>
</dbReference>
<dbReference type="PIR" id="T48435">
    <property type="entry name" value="T48435"/>
</dbReference>
<dbReference type="RefSeq" id="NP_001190221.1">
    <molecule id="Q6NN03-2"/>
    <property type="nucleotide sequence ID" value="NM_001203292.1"/>
</dbReference>
<dbReference type="RefSeq" id="NP_196028.2">
    <molecule id="Q6NN03-1"/>
    <property type="nucleotide sequence ID" value="NM_120490.4"/>
</dbReference>
<dbReference type="SMR" id="Q6NN03"/>
<dbReference type="FunCoup" id="Q6NN03">
    <property type="interactions" value="11"/>
</dbReference>
<dbReference type="PaxDb" id="3702-AT5G04080.1"/>
<dbReference type="EnsemblPlants" id="AT5G04080.1">
    <molecule id="Q6NN03-1"/>
    <property type="protein sequence ID" value="AT5G04080.1"/>
    <property type="gene ID" value="AT5G04080"/>
</dbReference>
<dbReference type="EnsemblPlants" id="AT5G04080.2">
    <molecule id="Q6NN03-2"/>
    <property type="protein sequence ID" value="AT5G04080.2"/>
    <property type="gene ID" value="AT5G04080"/>
</dbReference>
<dbReference type="GeneID" id="830287"/>
<dbReference type="Gramene" id="AT5G04080.1">
    <molecule id="Q6NN03-1"/>
    <property type="protein sequence ID" value="AT5G04080.1"/>
    <property type="gene ID" value="AT5G04080"/>
</dbReference>
<dbReference type="Gramene" id="AT5G04080.2">
    <molecule id="Q6NN03-2"/>
    <property type="protein sequence ID" value="AT5G04080.2"/>
    <property type="gene ID" value="AT5G04080"/>
</dbReference>
<dbReference type="KEGG" id="ath:AT5G04080"/>
<dbReference type="Araport" id="AT5G04080"/>
<dbReference type="TAIR" id="AT5G04080">
    <property type="gene designation" value="ATHCYSTM12"/>
</dbReference>
<dbReference type="eggNOG" id="ENOG502SDV1">
    <property type="taxonomic scope" value="Eukaryota"/>
</dbReference>
<dbReference type="HOGENOM" id="CLU_128451_6_1_1"/>
<dbReference type="InParanoid" id="Q6NN03"/>
<dbReference type="OMA" id="MAIAEDQ"/>
<dbReference type="PhylomeDB" id="Q6NN03"/>
<dbReference type="PRO" id="PR:Q6NN03"/>
<dbReference type="Proteomes" id="UP000006548">
    <property type="component" value="Chromosome 5"/>
</dbReference>
<dbReference type="ExpressionAtlas" id="Q6NN03">
    <property type="expression patterns" value="baseline and differential"/>
</dbReference>
<dbReference type="GO" id="GO:0005737">
    <property type="term" value="C:cytoplasm"/>
    <property type="evidence" value="ECO:0000314"/>
    <property type="project" value="UniProtKB"/>
</dbReference>
<dbReference type="GO" id="GO:0005886">
    <property type="term" value="C:plasma membrane"/>
    <property type="evidence" value="ECO:0000314"/>
    <property type="project" value="UniProtKB"/>
</dbReference>
<dbReference type="GO" id="GO:0042802">
    <property type="term" value="F:identical protein binding"/>
    <property type="evidence" value="ECO:0000314"/>
    <property type="project" value="UniProtKB"/>
</dbReference>
<dbReference type="GO" id="GO:0042803">
    <property type="term" value="F:protein homodimerization activity"/>
    <property type="evidence" value="ECO:0000314"/>
    <property type="project" value="UniProtKB"/>
</dbReference>
<dbReference type="InterPro" id="IPR028144">
    <property type="entry name" value="CYSTM_dom"/>
</dbReference>
<dbReference type="InterPro" id="IPR044850">
    <property type="entry name" value="WIH1-like"/>
</dbReference>
<dbReference type="PANTHER" id="PTHR31568:SF66">
    <property type="entry name" value="PROTEIN CYSTEINE-RICH TRANSMEMBRANE MODULE 12"/>
    <property type="match status" value="1"/>
</dbReference>
<dbReference type="PANTHER" id="PTHR31568">
    <property type="entry name" value="RCG49325, ISOFORM CRA_A"/>
    <property type="match status" value="1"/>
</dbReference>
<dbReference type="Pfam" id="PF12734">
    <property type="entry name" value="CYSTM"/>
    <property type="match status" value="1"/>
</dbReference>
<name>CST12_ARATH</name>
<organism>
    <name type="scientific">Arabidopsis thaliana</name>
    <name type="common">Mouse-ear cress</name>
    <dbReference type="NCBI Taxonomy" id="3702"/>
    <lineage>
        <taxon>Eukaryota</taxon>
        <taxon>Viridiplantae</taxon>
        <taxon>Streptophyta</taxon>
        <taxon>Embryophyta</taxon>
        <taxon>Tracheophyta</taxon>
        <taxon>Spermatophyta</taxon>
        <taxon>Magnoliopsida</taxon>
        <taxon>eudicotyledons</taxon>
        <taxon>Gunneridae</taxon>
        <taxon>Pentapetalae</taxon>
        <taxon>rosids</taxon>
        <taxon>malvids</taxon>
        <taxon>Brassicales</taxon>
        <taxon>Brassicaceae</taxon>
        <taxon>Camelineae</taxon>
        <taxon>Arabidopsis</taxon>
    </lineage>
</organism>
<proteinExistence type="evidence at protein level"/>
<accession>Q6NN03</accession>
<accession>Q9LZA2</accession>
<reference key="1">
    <citation type="journal article" date="2000" name="Nature">
        <title>Sequence and analysis of chromosome 5 of the plant Arabidopsis thaliana.</title>
        <authorList>
            <person name="Tabata S."/>
            <person name="Kaneko T."/>
            <person name="Nakamura Y."/>
            <person name="Kotani H."/>
            <person name="Kato T."/>
            <person name="Asamizu E."/>
            <person name="Miyajima N."/>
            <person name="Sasamoto S."/>
            <person name="Kimura T."/>
            <person name="Hosouchi T."/>
            <person name="Kawashima K."/>
            <person name="Kohara M."/>
            <person name="Matsumoto M."/>
            <person name="Matsuno A."/>
            <person name="Muraki A."/>
            <person name="Nakayama S."/>
            <person name="Nakazaki N."/>
            <person name="Naruo K."/>
            <person name="Okumura S."/>
            <person name="Shinpo S."/>
            <person name="Takeuchi C."/>
            <person name="Wada T."/>
            <person name="Watanabe A."/>
            <person name="Yamada M."/>
            <person name="Yasuda M."/>
            <person name="Sato S."/>
            <person name="de la Bastide M."/>
            <person name="Huang E."/>
            <person name="Spiegel L."/>
            <person name="Gnoj L."/>
            <person name="O'Shaughnessy A."/>
            <person name="Preston R."/>
            <person name="Habermann K."/>
            <person name="Murray J."/>
            <person name="Johnson D."/>
            <person name="Rohlfing T."/>
            <person name="Nelson J."/>
            <person name="Stoneking T."/>
            <person name="Pepin K."/>
            <person name="Spieth J."/>
            <person name="Sekhon M."/>
            <person name="Armstrong J."/>
            <person name="Becker M."/>
            <person name="Belter E."/>
            <person name="Cordum H."/>
            <person name="Cordes M."/>
            <person name="Courtney L."/>
            <person name="Courtney W."/>
            <person name="Dante M."/>
            <person name="Du H."/>
            <person name="Edwards J."/>
            <person name="Fryman J."/>
            <person name="Haakensen B."/>
            <person name="Lamar E."/>
            <person name="Latreille P."/>
            <person name="Leonard S."/>
            <person name="Meyer R."/>
            <person name="Mulvaney E."/>
            <person name="Ozersky P."/>
            <person name="Riley A."/>
            <person name="Strowmatt C."/>
            <person name="Wagner-McPherson C."/>
            <person name="Wollam A."/>
            <person name="Yoakum M."/>
            <person name="Bell M."/>
            <person name="Dedhia N."/>
            <person name="Parnell L."/>
            <person name="Shah R."/>
            <person name="Rodriguez M."/>
            <person name="Hoon See L."/>
            <person name="Vil D."/>
            <person name="Baker J."/>
            <person name="Kirchoff K."/>
            <person name="Toth K."/>
            <person name="King L."/>
            <person name="Bahret A."/>
            <person name="Miller B."/>
            <person name="Marra M.A."/>
            <person name="Martienssen R."/>
            <person name="McCombie W.R."/>
            <person name="Wilson R.K."/>
            <person name="Murphy G."/>
            <person name="Bancroft I."/>
            <person name="Volckaert G."/>
            <person name="Wambutt R."/>
            <person name="Duesterhoeft A."/>
            <person name="Stiekema W."/>
            <person name="Pohl T."/>
            <person name="Entian K.-D."/>
            <person name="Terryn N."/>
            <person name="Hartley N."/>
            <person name="Bent E."/>
            <person name="Johnson S."/>
            <person name="Langham S.-A."/>
            <person name="McCullagh B."/>
            <person name="Robben J."/>
            <person name="Grymonprez B."/>
            <person name="Zimmermann W."/>
            <person name="Ramsperger U."/>
            <person name="Wedler H."/>
            <person name="Balke K."/>
            <person name="Wedler E."/>
            <person name="Peters S."/>
            <person name="van Staveren M."/>
            <person name="Dirkse W."/>
            <person name="Mooijman P."/>
            <person name="Klein Lankhorst R."/>
            <person name="Weitzenegger T."/>
            <person name="Bothe G."/>
            <person name="Rose M."/>
            <person name="Hauf J."/>
            <person name="Berneiser S."/>
            <person name="Hempel S."/>
            <person name="Feldpausch M."/>
            <person name="Lamberth S."/>
            <person name="Villarroel R."/>
            <person name="Gielen J."/>
            <person name="Ardiles W."/>
            <person name="Bents O."/>
            <person name="Lemcke K."/>
            <person name="Kolesov G."/>
            <person name="Mayer K.F.X."/>
            <person name="Rudd S."/>
            <person name="Schoof H."/>
            <person name="Schueller C."/>
            <person name="Zaccaria P."/>
            <person name="Mewes H.-W."/>
            <person name="Bevan M."/>
            <person name="Fransz P.F."/>
        </authorList>
    </citation>
    <scope>NUCLEOTIDE SEQUENCE [LARGE SCALE GENOMIC DNA] (ISOFORM 2)</scope>
    <source>
        <strain>cv. Columbia</strain>
    </source>
</reference>
<reference key="2">
    <citation type="journal article" date="2017" name="Plant J.">
        <title>Araport11: a complete reannotation of the Arabidopsis thaliana reference genome.</title>
        <authorList>
            <person name="Cheng C.Y."/>
            <person name="Krishnakumar V."/>
            <person name="Chan A.P."/>
            <person name="Thibaud-Nissen F."/>
            <person name="Schobel S."/>
            <person name="Town C.D."/>
        </authorList>
    </citation>
    <scope>GENOME REANNOTATION</scope>
    <source>
        <strain>cv. Columbia</strain>
    </source>
</reference>
<reference key="3">
    <citation type="submission" date="2004-01" db="EMBL/GenBank/DDBJ databases">
        <title>Arabidopsis ORF clones.</title>
        <authorList>
            <person name="Shinn P."/>
            <person name="Chen H."/>
            <person name="Cheuk R.F."/>
            <person name="Kim C.J."/>
            <person name="Ecker J.R."/>
        </authorList>
    </citation>
    <scope>NUCLEOTIDE SEQUENCE [LARGE SCALE MRNA]</scope>
</reference>
<reference key="4">
    <citation type="journal article" date="2018" name="Plant Cell Physiol.">
        <title>CYSTM, a novel non-secreted cysteine-rich peptide family, involved in environmental stresses in Arabidopsis thaliana.</title>
        <authorList>
            <person name="Xu Y."/>
            <person name="Yu Z."/>
            <person name="Zhang D."/>
            <person name="Huang J."/>
            <person name="Wu C."/>
            <person name="Yang G."/>
            <person name="Yan K."/>
            <person name="Zhang S."/>
            <person name="Zheng C."/>
        </authorList>
    </citation>
    <scope>FUNCTION</scope>
    <scope>HOMODIMERIZATION</scope>
    <scope>INTERACTION WITH CYSTM4; CYSTM6 AND CYSTM7</scope>
    <scope>TISSUE SPECIFICITY</scope>
    <scope>INDUCTION BY SALT</scope>
    <scope>SUBCELLULAR LOCATION</scope>
    <source>
        <strain>cv. Columbia</strain>
    </source>
</reference>
<evidence type="ECO:0000255" key="1"/>
<evidence type="ECO:0000256" key="2">
    <source>
        <dbReference type="SAM" id="MobiDB-lite"/>
    </source>
</evidence>
<evidence type="ECO:0000269" key="3">
    <source>
    </source>
</evidence>
<evidence type="ECO:0000303" key="4">
    <source>
    </source>
</evidence>
<evidence type="ECO:0000305" key="5"/>
<evidence type="ECO:0000312" key="6">
    <source>
        <dbReference type="Araport" id="AT5G04080"/>
    </source>
</evidence>
<evidence type="ECO:0000312" key="7">
    <source>
        <dbReference type="EMBL" id="CAB85528.1"/>
    </source>
</evidence>
<keyword id="KW-0025">Alternative splicing</keyword>
<keyword id="KW-1003">Cell membrane</keyword>
<keyword id="KW-0963">Cytoplasm</keyword>
<keyword id="KW-0472">Membrane</keyword>
<keyword id="KW-1185">Reference proteome</keyword>
<keyword id="KW-0812">Transmembrane</keyword>
<keyword id="KW-1133">Transmembrane helix</keyword>
<gene>
    <name evidence="4" type="primary">CYSTM12</name>
    <name evidence="6" type="ordered locus">At5g04080</name>
    <name evidence="7" type="ORF">F8F6_290</name>
</gene>
<protein>
    <recommendedName>
        <fullName evidence="4">Protein CYSTEINE-RICH TRANSMEMBRANE MODULE 12</fullName>
        <shortName evidence="4">AthCYSTM12</shortName>
    </recommendedName>
</protein>
<feature type="chain" id="PRO_0000454809" description="Protein CYSTEINE-RICH TRANSMEMBRANE MODULE 12">
    <location>
        <begin position="1"/>
        <end position="63"/>
    </location>
</feature>
<feature type="transmembrane region" description="Helical" evidence="1">
    <location>
        <begin position="40"/>
        <end position="56"/>
    </location>
</feature>
<feature type="region of interest" description="Disordered" evidence="2">
    <location>
        <begin position="1"/>
        <end position="34"/>
    </location>
</feature>
<feature type="splice variant" id="VSP_061396" description="In isoform 2.">
    <original>C</original>
    <variation>W</variation>
    <location>
        <position position="49"/>
    </location>
</feature>
<feature type="splice variant" id="VSP_061397" description="In isoform 2.">
    <location>
        <begin position="50"/>
        <end position="63"/>
    </location>
</feature>
<sequence>MQDMRDQNPPQGYPAAEQVSEQPGQDKKKKKPRFFETKQKGDRGFIEGCLFALCCCWICEMCF</sequence>